<organism>
    <name type="scientific">Arabidopsis thaliana</name>
    <name type="common">Mouse-ear cress</name>
    <dbReference type="NCBI Taxonomy" id="3702"/>
    <lineage>
        <taxon>Eukaryota</taxon>
        <taxon>Viridiplantae</taxon>
        <taxon>Streptophyta</taxon>
        <taxon>Embryophyta</taxon>
        <taxon>Tracheophyta</taxon>
        <taxon>Spermatophyta</taxon>
        <taxon>Magnoliopsida</taxon>
        <taxon>eudicotyledons</taxon>
        <taxon>Gunneridae</taxon>
        <taxon>Pentapetalae</taxon>
        <taxon>rosids</taxon>
        <taxon>malvids</taxon>
        <taxon>Brassicales</taxon>
        <taxon>Brassicaceae</taxon>
        <taxon>Camelineae</taxon>
        <taxon>Arabidopsis</taxon>
    </lineage>
</organism>
<evidence type="ECO:0000250" key="1"/>
<evidence type="ECO:0000255" key="2"/>
<evidence type="ECO:0000269" key="3">
    <source>
    </source>
</evidence>
<evidence type="ECO:0000269" key="4">
    <source>
    </source>
</evidence>
<evidence type="ECO:0000269" key="5">
    <source>
    </source>
</evidence>
<evidence type="ECO:0000269" key="6">
    <source>
    </source>
</evidence>
<evidence type="ECO:0000269" key="7">
    <source>
    </source>
</evidence>
<evidence type="ECO:0000305" key="8"/>
<sequence length="965" mass="107067">MALTLTPTSSVHLLSSISVARPRIFAADFNLRSRWRRRRPVTSISNFRLRLPSKTSLHCLCSSSSASSPMSLEVSSPNSQFLDCLIYSRAYWVTQGVIAWNVDVGEGSCYFYASKSAGLSFSEDGIDGYDLRIKLEAESGSLPADVIEKFPHIRNYKSFKVPKDLDIRDLVKSQLAVVCFDAEGRLIQGTGLQLPGVLDELFSYDGPLGAHFTPEGVSLHLWAPTAQAVSVCIYKNPLDKSPMEICPLKEANGVWSTEGACSWGGCYYVYKVSVYHPSTMKLETCYANDPYARGLSADGRKTFLVNLDSDDLKPEGWDNLADKKPCLRSFSDISIYELHVRDFSANDETVEPENRGGYLAFTSKDSAGVKHLQKLVDAGLTHLHLLPTFQFGDVDDEKENWKSVDTSLLEGLRPDSTEAQARITEIQNDDGYNWGYNPVLWGVPKGSYASDPTGPCRIIEFRKMVQALNCTGLNVVLDVVYNHLHASGPHDKESVLDKIVPGYYLRRNSDGFIENSTCVNNTASEHYMVDRLIRDDLLNWVVNYKVDGFRFDLMGHIMKATIVNAKSAIGSLRKETDGVDGSRIYLYGEGWNFGEVAENGRGINASQFNLGGTGIGSFNDRIRDATLGGSPFGHPLQQGFITGLLLQPNAHDHGSEATQELMLSTAKNHIQTGMAANLKDYMLTNHEGKEVKGSEVLMHDATPVAYASLPTETINYVSAHDNETLFDIISLKTPMEISVDERCRINHLASSMIALSQGIPFFHAGDEILRSKSLDRDSYNSGDWFNRLDFSYSSNNWGVGLPPKGKNEHNWPLIKPRLQDPSFKPKSSHIVATLHNFLDLLRIRYSSPLFRLDTARAIQERVRFHNTGPSSIPGAIVMSIEDGHRGIPSVSQIDPIYSLIVVIFNARPSEFSYPSPALKDRKLELHPVQVMSADEIVKKSVYDSFSGGFTVPARTTTVFVESRNG</sequence>
<name>PULA1_ARATH</name>
<accession>Q8GTR4</accession>
<proteinExistence type="evidence at protein level"/>
<protein>
    <recommendedName>
        <fullName>Pullulanase 1, chloroplastic</fullName>
        <shortName>AtPU1</shortName>
        <ecNumber>3.2.1.142</ecNumber>
    </recommendedName>
    <alternativeName>
        <fullName>Protein LIMIT DEXTRINASE</fullName>
        <shortName>AtLDA</shortName>
    </alternativeName>
</protein>
<gene>
    <name type="primary">PU1</name>
    <name type="synonym">LDA</name>
    <name type="ordered locus">At5g04360</name>
    <name type="ORF">T19N18.90</name>
</gene>
<dbReference type="EC" id="3.2.1.142"/>
<dbReference type="EMBL" id="CP002688">
    <property type="protein sequence ID" value="AED90732.1"/>
    <property type="molecule type" value="Genomic_DNA"/>
</dbReference>
<dbReference type="EMBL" id="CP002688">
    <property type="protein sequence ID" value="ANM68325.1"/>
    <property type="molecule type" value="Genomic_DNA"/>
</dbReference>
<dbReference type="EMBL" id="BT002411">
    <property type="protein sequence ID" value="AAO00771.1"/>
    <property type="molecule type" value="mRNA"/>
</dbReference>
<dbReference type="RefSeq" id="NP_001330089.1">
    <property type="nucleotide sequence ID" value="NM_001342767.1"/>
</dbReference>
<dbReference type="RefSeq" id="NP_196056.2">
    <property type="nucleotide sequence ID" value="NM_120518.5"/>
</dbReference>
<dbReference type="SMR" id="Q8GTR4"/>
<dbReference type="FunCoup" id="Q8GTR4">
    <property type="interactions" value="373"/>
</dbReference>
<dbReference type="STRING" id="3702.Q8GTR4"/>
<dbReference type="CAZy" id="CBM48">
    <property type="family name" value="Carbohydrate-Binding Module Family 48"/>
</dbReference>
<dbReference type="CAZy" id="GH13">
    <property type="family name" value="Glycoside Hydrolase Family 13"/>
</dbReference>
<dbReference type="MetOSite" id="Q8GTR4"/>
<dbReference type="PaxDb" id="3702-AT5G04360.1"/>
<dbReference type="ProteomicsDB" id="226080"/>
<dbReference type="EnsemblPlants" id="AT5G04360.1">
    <property type="protein sequence ID" value="AT5G04360.1"/>
    <property type="gene ID" value="AT5G04360"/>
</dbReference>
<dbReference type="EnsemblPlants" id="AT5G04360.2">
    <property type="protein sequence ID" value="AT5G04360.2"/>
    <property type="gene ID" value="AT5G04360"/>
</dbReference>
<dbReference type="GeneID" id="830315"/>
<dbReference type="Gramene" id="AT5G04360.1">
    <property type="protein sequence ID" value="AT5G04360.1"/>
    <property type="gene ID" value="AT5G04360"/>
</dbReference>
<dbReference type="Gramene" id="AT5G04360.2">
    <property type="protein sequence ID" value="AT5G04360.2"/>
    <property type="gene ID" value="AT5G04360"/>
</dbReference>
<dbReference type="KEGG" id="ath:AT5G04360"/>
<dbReference type="Araport" id="AT5G04360"/>
<dbReference type="TAIR" id="AT5G04360">
    <property type="gene designation" value="LDA"/>
</dbReference>
<dbReference type="eggNOG" id="KOG0470">
    <property type="taxonomic scope" value="Eukaryota"/>
</dbReference>
<dbReference type="HOGENOM" id="CLU_004744_5_1_1"/>
<dbReference type="InParanoid" id="Q8GTR4"/>
<dbReference type="OMA" id="DKIVPWY"/>
<dbReference type="BioCyc" id="ARA:AT5G04360-MONOMER"/>
<dbReference type="UniPathway" id="UPA00152"/>
<dbReference type="UniPathway" id="UPA00153"/>
<dbReference type="PRO" id="PR:Q8GTR4"/>
<dbReference type="Proteomes" id="UP000006548">
    <property type="component" value="Chromosome 5"/>
</dbReference>
<dbReference type="ExpressionAtlas" id="Q8GTR4">
    <property type="expression patterns" value="baseline and differential"/>
</dbReference>
<dbReference type="GO" id="GO:0009507">
    <property type="term" value="C:chloroplast"/>
    <property type="evidence" value="ECO:0007005"/>
    <property type="project" value="TAIR"/>
</dbReference>
<dbReference type="GO" id="GO:0009570">
    <property type="term" value="C:chloroplast stroma"/>
    <property type="evidence" value="ECO:0007005"/>
    <property type="project" value="TAIR"/>
</dbReference>
<dbReference type="GO" id="GO:0010303">
    <property type="term" value="F:limit dextrinase activity"/>
    <property type="evidence" value="ECO:0000314"/>
    <property type="project" value="TAIR"/>
</dbReference>
<dbReference type="GO" id="GO:0051060">
    <property type="term" value="F:pullulanase activity"/>
    <property type="evidence" value="ECO:0000314"/>
    <property type="project" value="TAIR"/>
</dbReference>
<dbReference type="GO" id="GO:0019252">
    <property type="term" value="P:starch biosynthetic process"/>
    <property type="evidence" value="ECO:0000315"/>
    <property type="project" value="TAIR"/>
</dbReference>
<dbReference type="GO" id="GO:0005983">
    <property type="term" value="P:starch catabolic process"/>
    <property type="evidence" value="ECO:0000315"/>
    <property type="project" value="TAIR"/>
</dbReference>
<dbReference type="CDD" id="cd11341">
    <property type="entry name" value="AmyAc_Pullulanase_LD-like"/>
    <property type="match status" value="1"/>
</dbReference>
<dbReference type="CDD" id="cd02860">
    <property type="entry name" value="E_set_Pullulanase"/>
    <property type="match status" value="1"/>
</dbReference>
<dbReference type="FunFam" id="2.60.40.10:FF:002716">
    <property type="entry name" value="Pullulanase 1, chloroplastic"/>
    <property type="match status" value="1"/>
</dbReference>
<dbReference type="FunFam" id="2.60.40.1130:FF:000002">
    <property type="entry name" value="Pullulanase 1, chloroplastic"/>
    <property type="match status" value="1"/>
</dbReference>
<dbReference type="FunFam" id="3.20.20.80:FF:000239">
    <property type="entry name" value="Pullulanase 1, chloroplastic"/>
    <property type="match status" value="1"/>
</dbReference>
<dbReference type="Gene3D" id="3.20.20.80">
    <property type="entry name" value="Glycosidases"/>
    <property type="match status" value="1"/>
</dbReference>
<dbReference type="Gene3D" id="2.60.40.1180">
    <property type="entry name" value="Golgi alpha-mannosidase II"/>
    <property type="match status" value="1"/>
</dbReference>
<dbReference type="Gene3D" id="2.60.40.10">
    <property type="entry name" value="Immunoglobulins"/>
    <property type="match status" value="1"/>
</dbReference>
<dbReference type="Gene3D" id="2.60.40.1130">
    <property type="entry name" value="Rab geranylgeranyltransferase alpha-subunit, insert domain"/>
    <property type="match status" value="1"/>
</dbReference>
<dbReference type="InterPro" id="IPR004193">
    <property type="entry name" value="Glyco_hydro_13_N"/>
</dbReference>
<dbReference type="InterPro" id="IPR013780">
    <property type="entry name" value="Glyco_hydro_b"/>
</dbReference>
<dbReference type="InterPro" id="IPR017853">
    <property type="entry name" value="Glycoside_hydrolase_SF"/>
</dbReference>
<dbReference type="InterPro" id="IPR013783">
    <property type="entry name" value="Ig-like_fold"/>
</dbReference>
<dbReference type="InterPro" id="IPR014756">
    <property type="entry name" value="Ig_E-set"/>
</dbReference>
<dbReference type="InterPro" id="IPR011839">
    <property type="entry name" value="Pullul_strch"/>
</dbReference>
<dbReference type="InterPro" id="IPR024561">
    <property type="entry name" value="Pullul_strch_C"/>
</dbReference>
<dbReference type="InterPro" id="IPR040671">
    <property type="entry name" value="Pullulanase_N2"/>
</dbReference>
<dbReference type="NCBIfam" id="TIGR02103">
    <property type="entry name" value="pullul_strch"/>
    <property type="match status" value="1"/>
</dbReference>
<dbReference type="PANTHER" id="PTHR43002">
    <property type="entry name" value="GLYCOGEN DEBRANCHING ENZYME"/>
    <property type="match status" value="1"/>
</dbReference>
<dbReference type="Pfam" id="PF02922">
    <property type="entry name" value="CBM_48"/>
    <property type="match status" value="1"/>
</dbReference>
<dbReference type="Pfam" id="PF11852">
    <property type="entry name" value="Pullul_strch_C"/>
    <property type="match status" value="1"/>
</dbReference>
<dbReference type="Pfam" id="PF17967">
    <property type="entry name" value="Pullulanase_N2"/>
    <property type="match status" value="1"/>
</dbReference>
<dbReference type="SUPFAM" id="SSF51445">
    <property type="entry name" value="(Trans)glycosidases"/>
    <property type="match status" value="1"/>
</dbReference>
<dbReference type="SUPFAM" id="SSF81296">
    <property type="entry name" value="E set domains"/>
    <property type="match status" value="2"/>
</dbReference>
<dbReference type="SUPFAM" id="SSF51011">
    <property type="entry name" value="Glycosyl hydrolase domain"/>
    <property type="match status" value="1"/>
</dbReference>
<reference key="1">
    <citation type="journal article" date="2000" name="Nature">
        <title>Sequence and analysis of chromosome 5 of the plant Arabidopsis thaliana.</title>
        <authorList>
            <person name="Tabata S."/>
            <person name="Kaneko T."/>
            <person name="Nakamura Y."/>
            <person name="Kotani H."/>
            <person name="Kato T."/>
            <person name="Asamizu E."/>
            <person name="Miyajima N."/>
            <person name="Sasamoto S."/>
            <person name="Kimura T."/>
            <person name="Hosouchi T."/>
            <person name="Kawashima K."/>
            <person name="Kohara M."/>
            <person name="Matsumoto M."/>
            <person name="Matsuno A."/>
            <person name="Muraki A."/>
            <person name="Nakayama S."/>
            <person name="Nakazaki N."/>
            <person name="Naruo K."/>
            <person name="Okumura S."/>
            <person name="Shinpo S."/>
            <person name="Takeuchi C."/>
            <person name="Wada T."/>
            <person name="Watanabe A."/>
            <person name="Yamada M."/>
            <person name="Yasuda M."/>
            <person name="Sato S."/>
            <person name="de la Bastide M."/>
            <person name="Huang E."/>
            <person name="Spiegel L."/>
            <person name="Gnoj L."/>
            <person name="O'Shaughnessy A."/>
            <person name="Preston R."/>
            <person name="Habermann K."/>
            <person name="Murray J."/>
            <person name="Johnson D."/>
            <person name="Rohlfing T."/>
            <person name="Nelson J."/>
            <person name="Stoneking T."/>
            <person name="Pepin K."/>
            <person name="Spieth J."/>
            <person name="Sekhon M."/>
            <person name="Armstrong J."/>
            <person name="Becker M."/>
            <person name="Belter E."/>
            <person name="Cordum H."/>
            <person name="Cordes M."/>
            <person name="Courtney L."/>
            <person name="Courtney W."/>
            <person name="Dante M."/>
            <person name="Du H."/>
            <person name="Edwards J."/>
            <person name="Fryman J."/>
            <person name="Haakensen B."/>
            <person name="Lamar E."/>
            <person name="Latreille P."/>
            <person name="Leonard S."/>
            <person name="Meyer R."/>
            <person name="Mulvaney E."/>
            <person name="Ozersky P."/>
            <person name="Riley A."/>
            <person name="Strowmatt C."/>
            <person name="Wagner-McPherson C."/>
            <person name="Wollam A."/>
            <person name="Yoakum M."/>
            <person name="Bell M."/>
            <person name="Dedhia N."/>
            <person name="Parnell L."/>
            <person name="Shah R."/>
            <person name="Rodriguez M."/>
            <person name="Hoon See L."/>
            <person name="Vil D."/>
            <person name="Baker J."/>
            <person name="Kirchoff K."/>
            <person name="Toth K."/>
            <person name="King L."/>
            <person name="Bahret A."/>
            <person name="Miller B."/>
            <person name="Marra M.A."/>
            <person name="Martienssen R."/>
            <person name="McCombie W.R."/>
            <person name="Wilson R.K."/>
            <person name="Murphy G."/>
            <person name="Bancroft I."/>
            <person name="Volckaert G."/>
            <person name="Wambutt R."/>
            <person name="Duesterhoeft A."/>
            <person name="Stiekema W."/>
            <person name="Pohl T."/>
            <person name="Entian K.-D."/>
            <person name="Terryn N."/>
            <person name="Hartley N."/>
            <person name="Bent E."/>
            <person name="Johnson S."/>
            <person name="Langham S.-A."/>
            <person name="McCullagh B."/>
            <person name="Robben J."/>
            <person name="Grymonprez B."/>
            <person name="Zimmermann W."/>
            <person name="Ramsperger U."/>
            <person name="Wedler H."/>
            <person name="Balke K."/>
            <person name="Wedler E."/>
            <person name="Peters S."/>
            <person name="van Staveren M."/>
            <person name="Dirkse W."/>
            <person name="Mooijman P."/>
            <person name="Klein Lankhorst R."/>
            <person name="Weitzenegger T."/>
            <person name="Bothe G."/>
            <person name="Rose M."/>
            <person name="Hauf J."/>
            <person name="Berneiser S."/>
            <person name="Hempel S."/>
            <person name="Feldpausch M."/>
            <person name="Lamberth S."/>
            <person name="Villarroel R."/>
            <person name="Gielen J."/>
            <person name="Ardiles W."/>
            <person name="Bents O."/>
            <person name="Lemcke K."/>
            <person name="Kolesov G."/>
            <person name="Mayer K.F.X."/>
            <person name="Rudd S."/>
            <person name="Schoof H."/>
            <person name="Schueller C."/>
            <person name="Zaccaria P."/>
            <person name="Mewes H.-W."/>
            <person name="Bevan M."/>
            <person name="Fransz P.F."/>
        </authorList>
    </citation>
    <scope>NUCLEOTIDE SEQUENCE [LARGE SCALE GENOMIC DNA]</scope>
    <source>
        <strain>cv. Columbia</strain>
    </source>
</reference>
<reference key="2">
    <citation type="journal article" date="2017" name="Plant J.">
        <title>Araport11: a complete reannotation of the Arabidopsis thaliana reference genome.</title>
        <authorList>
            <person name="Cheng C.Y."/>
            <person name="Krishnakumar V."/>
            <person name="Chan A.P."/>
            <person name="Thibaud-Nissen F."/>
            <person name="Schobel S."/>
            <person name="Town C.D."/>
        </authorList>
    </citation>
    <scope>GENOME REANNOTATION</scope>
    <source>
        <strain>cv. Columbia</strain>
    </source>
</reference>
<reference key="3">
    <citation type="journal article" date="2003" name="Science">
        <title>Empirical analysis of transcriptional activity in the Arabidopsis genome.</title>
        <authorList>
            <person name="Yamada K."/>
            <person name="Lim J."/>
            <person name="Dale J.M."/>
            <person name="Chen H."/>
            <person name="Shinn P."/>
            <person name="Palm C.J."/>
            <person name="Southwick A.M."/>
            <person name="Wu H.C."/>
            <person name="Kim C.J."/>
            <person name="Nguyen M."/>
            <person name="Pham P.K."/>
            <person name="Cheuk R.F."/>
            <person name="Karlin-Newmann G."/>
            <person name="Liu S.X."/>
            <person name="Lam B."/>
            <person name="Sakano H."/>
            <person name="Wu T."/>
            <person name="Yu G."/>
            <person name="Miranda M."/>
            <person name="Quach H.L."/>
            <person name="Tripp M."/>
            <person name="Chang C.H."/>
            <person name="Lee J.M."/>
            <person name="Toriumi M.J."/>
            <person name="Chan M.M."/>
            <person name="Tang C.C."/>
            <person name="Onodera C.S."/>
            <person name="Deng J.M."/>
            <person name="Akiyama K."/>
            <person name="Ansari Y."/>
            <person name="Arakawa T."/>
            <person name="Banh J."/>
            <person name="Banno F."/>
            <person name="Bowser L."/>
            <person name="Brooks S.Y."/>
            <person name="Carninci P."/>
            <person name="Chao Q."/>
            <person name="Choy N."/>
            <person name="Enju A."/>
            <person name="Goldsmith A.D."/>
            <person name="Gurjal M."/>
            <person name="Hansen N.F."/>
            <person name="Hayashizaki Y."/>
            <person name="Johnson-Hopson C."/>
            <person name="Hsuan V.W."/>
            <person name="Iida K."/>
            <person name="Karnes M."/>
            <person name="Khan S."/>
            <person name="Koesema E."/>
            <person name="Ishida J."/>
            <person name="Jiang P.X."/>
            <person name="Jones T."/>
            <person name="Kawai J."/>
            <person name="Kamiya A."/>
            <person name="Meyers C."/>
            <person name="Nakajima M."/>
            <person name="Narusaka M."/>
            <person name="Seki M."/>
            <person name="Sakurai T."/>
            <person name="Satou M."/>
            <person name="Tamse R."/>
            <person name="Vaysberg M."/>
            <person name="Wallender E.K."/>
            <person name="Wong C."/>
            <person name="Yamamura Y."/>
            <person name="Yuan S."/>
            <person name="Shinozaki K."/>
            <person name="Davis R.W."/>
            <person name="Theologis A."/>
            <person name="Ecker J.R."/>
        </authorList>
    </citation>
    <scope>NUCLEOTIDE SEQUENCE [LARGE SCALE MRNA]</scope>
    <source>
        <strain>cv. Columbia</strain>
    </source>
</reference>
<reference key="4">
    <citation type="journal article" date="2005" name="Plant Physiol.">
        <title>Mutants of Arabidopsis lacking a chloroplastic isoamylase accumulate phytoglycogen and an abnormal form of amylopectin.</title>
        <authorList>
            <person name="Wattebled F."/>
            <person name="Dong Y."/>
            <person name="Dumez S."/>
            <person name="Delvalle D."/>
            <person name="Planchot V."/>
            <person name="Berbezy P."/>
            <person name="Vyas D."/>
            <person name="Colonna P."/>
            <person name="Chatterjee M."/>
            <person name="Ball S."/>
            <person name="D'Hulst C."/>
        </authorList>
    </citation>
    <scope>DISRUPTION PHENOTYPE</scope>
</reference>
<reference key="5">
    <citation type="journal article" date="2006" name="J. Biol. Chem.">
        <title>Evidence for distinct mechanisms of starch granule breakdown in plants.</title>
        <authorList>
            <person name="Delatte T."/>
            <person name="Umhang M."/>
            <person name="Trevisan M."/>
            <person name="Eicke S."/>
            <person name="Thorneycroft D."/>
            <person name="Smith S.M."/>
            <person name="Zeeman S.C."/>
        </authorList>
    </citation>
    <scope>FUNCTION</scope>
    <scope>SUBCELLULAR LOCATION</scope>
</reference>
<reference key="6">
    <citation type="journal article" date="2008" name="PLoS ONE">
        <title>Sorting signals, N-terminal modifications and abundance of the chloroplast proteome.</title>
        <authorList>
            <person name="Zybailov B."/>
            <person name="Rutschow H."/>
            <person name="Friso G."/>
            <person name="Rudella A."/>
            <person name="Emanuelsson O."/>
            <person name="Sun Q."/>
            <person name="van Wijk K.J."/>
        </authorList>
    </citation>
    <scope>IDENTIFICATION BY MASS SPECTROMETRY</scope>
    <scope>SUBCELLULAR LOCATION [LARGE SCALE ANALYSIS]</scope>
</reference>
<reference key="7">
    <citation type="journal article" date="2008" name="Plant Cell">
        <title>Starch granule biosynthesis in Arabidopsis is abolished by removal of all debranching enzymes but restored by the subsequent removal of an endoamylase.</title>
        <authorList>
            <person name="Streb S."/>
            <person name="Delatte T."/>
            <person name="Umhang M."/>
            <person name="Eicke S."/>
            <person name="Schorderet M."/>
            <person name="Reinhardt D."/>
            <person name="Zeeman S.C."/>
        </authorList>
    </citation>
    <scope>FUNCTION</scope>
</reference>
<reference key="8">
    <citation type="journal article" date="2008" name="Plant Physiol.">
        <title>Further evidence for the mandatory nature of polysaccharide debranching for the aggregation of semicrystalline starch and for overlapping functions of debranching enzymes in Arabidopsis leaves.</title>
        <authorList>
            <person name="Wattebled F."/>
            <person name="Planchot V."/>
            <person name="Dong Y."/>
            <person name="Szydlowski N."/>
            <person name="Pontoire B."/>
            <person name="Devin A."/>
            <person name="Ball S."/>
            <person name="D'Hulst C."/>
        </authorList>
    </citation>
    <scope>FUNCTION</scope>
</reference>
<comment type="function">
    <text evidence="4 6 7">Involved in starch degradation and also probably in the trimming of pre-amylopectin chains during starch synthesis.</text>
</comment>
<comment type="catalytic activity">
    <reaction>
        <text>Hydrolysis of (1-&gt;6)-alpha-D-glucosidic linkages in alpha- and beta-limit dextrins of amylopectin and glycogen, and in amylopectin and pullulan.</text>
        <dbReference type="EC" id="3.2.1.142"/>
    </reaction>
</comment>
<comment type="pathway">
    <text>Glycan biosynthesis; starch biosynthesis.</text>
</comment>
<comment type="pathway">
    <text>Glycan degradation; starch degradation.</text>
</comment>
<comment type="subcellular location">
    <subcellularLocation>
        <location evidence="4 5">Plastid</location>
        <location evidence="4 5">Chloroplast stroma</location>
    </subcellularLocation>
</comment>
<comment type="disruption phenotype">
    <text evidence="3">No effect on the starch level in leaves and slight increase of water-soluble polysaccharides. No alteration of the amylase-to-amylopectin ratio. ISA3 is able to fully compensate for the loss of PU1.</text>
</comment>
<comment type="miscellaneous">
    <text>Double mutant shows that PU1 and ISA3 have redundant function for starch degradation. The involvement of PU1 in amylopectin synthesis is inferred from the phenotype of double mutant in PU1 and ISA2.</text>
</comment>
<comment type="similarity">
    <text evidence="8">Belongs to the glycosyl hydrolase 13 family.</text>
</comment>
<feature type="transit peptide" description="Chloroplast" evidence="2">
    <location>
        <begin position="1"/>
        <end position="62"/>
    </location>
</feature>
<feature type="chain" id="PRO_0000379530" description="Pullulanase 1, chloroplastic">
    <location>
        <begin position="63"/>
        <end position="965"/>
    </location>
</feature>
<feature type="active site" description="Nucleophile" evidence="1">
    <location>
        <position position="552"/>
    </location>
</feature>
<feature type="active site" description="Proton donor" evidence="1">
    <location>
        <position position="589"/>
    </location>
</feature>
<feature type="site" description="Transition state stabilizer" evidence="1">
    <location>
        <position position="721"/>
    </location>
</feature>
<feature type="sequence conflict" description="In Ref. 3; AAO00771." evidence="8" ref="3">
    <original>Q</original>
    <variation>K</variation>
    <location>
        <position position="859"/>
    </location>
</feature>
<keyword id="KW-0119">Carbohydrate metabolism</keyword>
<keyword id="KW-0150">Chloroplast</keyword>
<keyword id="KW-0326">Glycosidase</keyword>
<keyword id="KW-0378">Hydrolase</keyword>
<keyword id="KW-0934">Plastid</keyword>
<keyword id="KW-1185">Reference proteome</keyword>
<keyword id="KW-0750">Starch biosynthesis</keyword>
<keyword id="KW-0809">Transit peptide</keyword>